<gene>
    <name evidence="1" type="primary">mcsB</name>
    <name type="ordered locus">CTC_02634</name>
</gene>
<evidence type="ECO:0000255" key="1">
    <source>
        <dbReference type="HAMAP-Rule" id="MF_00602"/>
    </source>
</evidence>
<proteinExistence type="inferred from homology"/>
<keyword id="KW-0067">ATP-binding</keyword>
<keyword id="KW-0418">Kinase</keyword>
<keyword id="KW-0547">Nucleotide-binding</keyword>
<keyword id="KW-1185">Reference proteome</keyword>
<keyword id="KW-0808">Transferase</keyword>
<accession>Q890L4</accession>
<reference key="1">
    <citation type="journal article" date="2003" name="Proc. Natl. Acad. Sci. U.S.A.">
        <title>The genome sequence of Clostridium tetani, the causative agent of tetanus disease.</title>
        <authorList>
            <person name="Brueggemann H."/>
            <person name="Baeumer S."/>
            <person name="Fricke W.F."/>
            <person name="Wiezer A."/>
            <person name="Liesegang H."/>
            <person name="Decker I."/>
            <person name="Herzberg C."/>
            <person name="Martinez-Arias R."/>
            <person name="Merkl R."/>
            <person name="Henne A."/>
            <person name="Gottschalk G."/>
        </authorList>
    </citation>
    <scope>NUCLEOTIDE SEQUENCE [LARGE SCALE GENOMIC DNA]</scope>
    <source>
        <strain>Massachusetts / E88</strain>
    </source>
</reference>
<sequence>MNNWIHTSLDNSDIVLSSRIRLARNLSNFTYPHKISIEEGRKIVETIEKVLQNEESKYKVYRLWEMDPLDRVTYLEKYLISSKLILNNEKGAFITNEDETVSLMINEEDHIRLQCITNGFNLEEAYKCAEDLDDLIEENLDYAFDENLGYMTACPTNLGTGLRASVMIHLPTLTMNREINKIFSGLTQIGMTIRGIYGEGSKVVGNLFQVSNQLTLGLSEEEVINNLKAVVYQIINQEKLAREKIMKMHKYRIEDKVYRALGILNSAVLLDSEECLKLLSYVRLGVEMDIIKDVSKKVLNELTISIQPAMIQRIFNSKLTEEARQLKRAELVKRKLKNSI</sequence>
<dbReference type="EC" id="2.7.14.1" evidence="1"/>
<dbReference type="EMBL" id="AE015927">
    <property type="protein sequence ID" value="AAO37083.1"/>
    <property type="molecule type" value="Genomic_DNA"/>
</dbReference>
<dbReference type="RefSeq" id="WP_011100743.1">
    <property type="nucleotide sequence ID" value="NC_004557.1"/>
</dbReference>
<dbReference type="SMR" id="Q890L4"/>
<dbReference type="STRING" id="212717.CTC_02634"/>
<dbReference type="GeneID" id="24254592"/>
<dbReference type="KEGG" id="ctc:CTC_02634"/>
<dbReference type="HOGENOM" id="CLU_066591_1_0_9"/>
<dbReference type="OrthoDB" id="9791353at2"/>
<dbReference type="Proteomes" id="UP000001412">
    <property type="component" value="Chromosome"/>
</dbReference>
<dbReference type="GO" id="GO:0005615">
    <property type="term" value="C:extracellular space"/>
    <property type="evidence" value="ECO:0007669"/>
    <property type="project" value="TreeGrafter"/>
</dbReference>
<dbReference type="GO" id="GO:0005524">
    <property type="term" value="F:ATP binding"/>
    <property type="evidence" value="ECO:0007669"/>
    <property type="project" value="UniProtKB-KW"/>
</dbReference>
<dbReference type="GO" id="GO:0004111">
    <property type="term" value="F:creatine kinase activity"/>
    <property type="evidence" value="ECO:0007669"/>
    <property type="project" value="InterPro"/>
</dbReference>
<dbReference type="GO" id="GO:0004672">
    <property type="term" value="F:protein kinase activity"/>
    <property type="evidence" value="ECO:0007669"/>
    <property type="project" value="UniProtKB-UniRule"/>
</dbReference>
<dbReference type="GO" id="GO:0046314">
    <property type="term" value="P:phosphocreatine biosynthetic process"/>
    <property type="evidence" value="ECO:0007669"/>
    <property type="project" value="InterPro"/>
</dbReference>
<dbReference type="CDD" id="cd07930">
    <property type="entry name" value="bacterial_phosphagen_kinase"/>
    <property type="match status" value="1"/>
</dbReference>
<dbReference type="Gene3D" id="3.30.590.10">
    <property type="entry name" value="Glutamine synthetase/guanido kinase, catalytic domain"/>
    <property type="match status" value="1"/>
</dbReference>
<dbReference type="HAMAP" id="MF_00602">
    <property type="entry name" value="Prot_Arg_kinase"/>
    <property type="match status" value="1"/>
</dbReference>
<dbReference type="InterPro" id="IPR023660">
    <property type="entry name" value="Arg_Kinase"/>
</dbReference>
<dbReference type="InterPro" id="IPR000749">
    <property type="entry name" value="ATP-guanido_PTrfase"/>
</dbReference>
<dbReference type="InterPro" id="IPR022415">
    <property type="entry name" value="ATP-guanido_PTrfase_AS"/>
</dbReference>
<dbReference type="InterPro" id="IPR022414">
    <property type="entry name" value="ATP-guanido_PTrfase_cat"/>
</dbReference>
<dbReference type="InterPro" id="IPR014746">
    <property type="entry name" value="Gln_synth/guanido_kin_cat_dom"/>
</dbReference>
<dbReference type="NCBIfam" id="NF002194">
    <property type="entry name" value="PRK01059.1-4"/>
    <property type="match status" value="1"/>
</dbReference>
<dbReference type="PANTHER" id="PTHR11547:SF38">
    <property type="entry name" value="ARGININE KINASE 1-RELATED"/>
    <property type="match status" value="1"/>
</dbReference>
<dbReference type="PANTHER" id="PTHR11547">
    <property type="entry name" value="ARGININE OR CREATINE KINASE"/>
    <property type="match status" value="1"/>
</dbReference>
<dbReference type="Pfam" id="PF00217">
    <property type="entry name" value="ATP-gua_Ptrans"/>
    <property type="match status" value="1"/>
</dbReference>
<dbReference type="SUPFAM" id="SSF55931">
    <property type="entry name" value="Glutamine synthetase/guanido kinase"/>
    <property type="match status" value="1"/>
</dbReference>
<dbReference type="PROSITE" id="PS00112">
    <property type="entry name" value="PHOSPHAGEN_KINASE"/>
    <property type="match status" value="1"/>
</dbReference>
<dbReference type="PROSITE" id="PS51510">
    <property type="entry name" value="PHOSPHAGEN_KINASE_C"/>
    <property type="match status" value="1"/>
</dbReference>
<organism>
    <name type="scientific">Clostridium tetani (strain Massachusetts / E88)</name>
    <dbReference type="NCBI Taxonomy" id="212717"/>
    <lineage>
        <taxon>Bacteria</taxon>
        <taxon>Bacillati</taxon>
        <taxon>Bacillota</taxon>
        <taxon>Clostridia</taxon>
        <taxon>Eubacteriales</taxon>
        <taxon>Clostridiaceae</taxon>
        <taxon>Clostridium</taxon>
    </lineage>
</organism>
<name>MCSB_CLOTE</name>
<protein>
    <recommendedName>
        <fullName evidence="1">Protein-arginine kinase</fullName>
        <ecNumber evidence="1">2.7.14.1</ecNumber>
    </recommendedName>
</protein>
<comment type="function">
    <text evidence="1">Catalyzes the specific phosphorylation of arginine residues in proteins.</text>
</comment>
<comment type="catalytic activity">
    <reaction evidence="1">
        <text>L-arginyl-[protein] + ATP = N(omega)-phospho-L-arginyl-[protein] + ADP + H(+)</text>
        <dbReference type="Rhea" id="RHEA:43384"/>
        <dbReference type="Rhea" id="RHEA-COMP:10532"/>
        <dbReference type="Rhea" id="RHEA-COMP:10533"/>
        <dbReference type="ChEBI" id="CHEBI:15378"/>
        <dbReference type="ChEBI" id="CHEBI:29965"/>
        <dbReference type="ChEBI" id="CHEBI:30616"/>
        <dbReference type="ChEBI" id="CHEBI:83226"/>
        <dbReference type="ChEBI" id="CHEBI:456216"/>
        <dbReference type="EC" id="2.7.14.1"/>
    </reaction>
</comment>
<comment type="similarity">
    <text evidence="1">Belongs to the ATP:guanido phosphotransferase family.</text>
</comment>
<feature type="chain" id="PRO_0000212023" description="Protein-arginine kinase">
    <location>
        <begin position="1"/>
        <end position="340"/>
    </location>
</feature>
<feature type="domain" description="Phosphagen kinase C-terminal" evidence="1">
    <location>
        <begin position="14"/>
        <end position="241"/>
    </location>
</feature>
<feature type="binding site" evidence="1">
    <location>
        <begin position="17"/>
        <end position="21"/>
    </location>
    <ligand>
        <name>ATP</name>
        <dbReference type="ChEBI" id="CHEBI:30616"/>
    </ligand>
</feature>
<feature type="binding site" evidence="1">
    <location>
        <position position="112"/>
    </location>
    <ligand>
        <name>ATP</name>
        <dbReference type="ChEBI" id="CHEBI:30616"/>
    </ligand>
</feature>
<feature type="binding site" evidence="1">
    <location>
        <begin position="163"/>
        <end position="167"/>
    </location>
    <ligand>
        <name>ATP</name>
        <dbReference type="ChEBI" id="CHEBI:30616"/>
    </ligand>
</feature>
<feature type="binding site" evidence="1">
    <location>
        <begin position="194"/>
        <end position="199"/>
    </location>
    <ligand>
        <name>ATP</name>
        <dbReference type="ChEBI" id="CHEBI:30616"/>
    </ligand>
</feature>